<name>FLUC_THET2</name>
<protein>
    <recommendedName>
        <fullName evidence="1">Fluoride-specific ion channel FluC</fullName>
    </recommendedName>
</protein>
<dbReference type="EMBL" id="AE017221">
    <property type="protein sequence ID" value="AAS81990.1"/>
    <property type="molecule type" value="Genomic_DNA"/>
</dbReference>
<dbReference type="SMR" id="P61785"/>
<dbReference type="KEGG" id="tth:TT_C1648"/>
<dbReference type="eggNOG" id="COG0239">
    <property type="taxonomic scope" value="Bacteria"/>
</dbReference>
<dbReference type="HOGENOM" id="CLU_114342_2_3_0"/>
<dbReference type="Proteomes" id="UP000000592">
    <property type="component" value="Chromosome"/>
</dbReference>
<dbReference type="GO" id="GO:0005886">
    <property type="term" value="C:plasma membrane"/>
    <property type="evidence" value="ECO:0007669"/>
    <property type="project" value="UniProtKB-SubCell"/>
</dbReference>
<dbReference type="GO" id="GO:0062054">
    <property type="term" value="F:fluoride channel activity"/>
    <property type="evidence" value="ECO:0007669"/>
    <property type="project" value="UniProtKB-UniRule"/>
</dbReference>
<dbReference type="GO" id="GO:0046872">
    <property type="term" value="F:metal ion binding"/>
    <property type="evidence" value="ECO:0007669"/>
    <property type="project" value="UniProtKB-KW"/>
</dbReference>
<dbReference type="GO" id="GO:0140114">
    <property type="term" value="P:cellular detoxification of fluoride"/>
    <property type="evidence" value="ECO:0007669"/>
    <property type="project" value="UniProtKB-UniRule"/>
</dbReference>
<dbReference type="HAMAP" id="MF_00454">
    <property type="entry name" value="FluC"/>
    <property type="match status" value="1"/>
</dbReference>
<dbReference type="InterPro" id="IPR003691">
    <property type="entry name" value="FluC"/>
</dbReference>
<dbReference type="NCBIfam" id="TIGR00494">
    <property type="entry name" value="crcB"/>
    <property type="match status" value="1"/>
</dbReference>
<dbReference type="PANTHER" id="PTHR28259">
    <property type="entry name" value="FLUORIDE EXPORT PROTEIN 1-RELATED"/>
    <property type="match status" value="1"/>
</dbReference>
<dbReference type="PANTHER" id="PTHR28259:SF1">
    <property type="entry name" value="FLUORIDE EXPORT PROTEIN 1-RELATED"/>
    <property type="match status" value="1"/>
</dbReference>
<dbReference type="Pfam" id="PF02537">
    <property type="entry name" value="CRCB"/>
    <property type="match status" value="1"/>
</dbReference>
<sequence length="127" mass="13051">MGVERYLLVALGGALGSLLRYGLGAWVQGSLGAGFPWSTLFVNALGSFLIGLTLRLSLEGALSGEARLFLAVGVLGGFTTFSSLSYETLALLQGGEVGKALLYAFGSLFLGLLLAFLGYRLGGALVG</sequence>
<gene>
    <name evidence="1" type="primary">fluC</name>
    <name evidence="1" type="synonym">crcB</name>
    <name type="ordered locus">TT_C1648</name>
</gene>
<keyword id="KW-0997">Cell inner membrane</keyword>
<keyword id="KW-1003">Cell membrane</keyword>
<keyword id="KW-0407">Ion channel</keyword>
<keyword id="KW-0406">Ion transport</keyword>
<keyword id="KW-0472">Membrane</keyword>
<keyword id="KW-0479">Metal-binding</keyword>
<keyword id="KW-0915">Sodium</keyword>
<keyword id="KW-0812">Transmembrane</keyword>
<keyword id="KW-1133">Transmembrane helix</keyword>
<keyword id="KW-0813">Transport</keyword>
<feature type="chain" id="PRO_0000110204" description="Fluoride-specific ion channel FluC">
    <location>
        <begin position="1"/>
        <end position="127"/>
    </location>
</feature>
<feature type="transmembrane region" description="Helical" evidence="1">
    <location>
        <begin position="7"/>
        <end position="27"/>
    </location>
</feature>
<feature type="transmembrane region" description="Helical" evidence="1">
    <location>
        <begin position="31"/>
        <end position="51"/>
    </location>
</feature>
<feature type="transmembrane region" description="Helical" evidence="1">
    <location>
        <begin position="68"/>
        <end position="88"/>
    </location>
</feature>
<feature type="transmembrane region" description="Helical" evidence="1">
    <location>
        <begin position="97"/>
        <end position="117"/>
    </location>
</feature>
<feature type="binding site" evidence="1">
    <location>
        <position position="76"/>
    </location>
    <ligand>
        <name>Na(+)</name>
        <dbReference type="ChEBI" id="CHEBI:29101"/>
        <note>structural</note>
    </ligand>
</feature>
<feature type="binding site" evidence="1">
    <location>
        <position position="79"/>
    </location>
    <ligand>
        <name>Na(+)</name>
        <dbReference type="ChEBI" id="CHEBI:29101"/>
        <note>structural</note>
    </ligand>
</feature>
<proteinExistence type="inferred from homology"/>
<comment type="function">
    <text evidence="1">Fluoride-specific ion channel. Important for reducing fluoride concentration in the cell, thus reducing its toxicity.</text>
</comment>
<comment type="catalytic activity">
    <reaction evidence="1">
        <text>fluoride(in) = fluoride(out)</text>
        <dbReference type="Rhea" id="RHEA:76159"/>
        <dbReference type="ChEBI" id="CHEBI:17051"/>
    </reaction>
    <physiologicalReaction direction="left-to-right" evidence="1">
        <dbReference type="Rhea" id="RHEA:76160"/>
    </physiologicalReaction>
</comment>
<comment type="activity regulation">
    <text evidence="1">Na(+) is not transported, but it plays an essential structural role and its presence is essential for fluoride channel function.</text>
</comment>
<comment type="subcellular location">
    <subcellularLocation>
        <location evidence="1">Cell inner membrane</location>
        <topology evidence="1">Multi-pass membrane protein</topology>
    </subcellularLocation>
</comment>
<comment type="similarity">
    <text evidence="1">Belongs to the fluoride channel Fluc/FEX (TC 1.A.43) family.</text>
</comment>
<evidence type="ECO:0000255" key="1">
    <source>
        <dbReference type="HAMAP-Rule" id="MF_00454"/>
    </source>
</evidence>
<organism>
    <name type="scientific">Thermus thermophilus (strain ATCC BAA-163 / DSM 7039 / HB27)</name>
    <dbReference type="NCBI Taxonomy" id="262724"/>
    <lineage>
        <taxon>Bacteria</taxon>
        <taxon>Thermotogati</taxon>
        <taxon>Deinococcota</taxon>
        <taxon>Deinococci</taxon>
        <taxon>Thermales</taxon>
        <taxon>Thermaceae</taxon>
        <taxon>Thermus</taxon>
    </lineage>
</organism>
<accession>P61785</accession>
<reference key="1">
    <citation type="journal article" date="2004" name="Nat. Biotechnol.">
        <title>The genome sequence of the extreme thermophile Thermus thermophilus.</title>
        <authorList>
            <person name="Henne A."/>
            <person name="Brueggemann H."/>
            <person name="Raasch C."/>
            <person name="Wiezer A."/>
            <person name="Hartsch T."/>
            <person name="Liesegang H."/>
            <person name="Johann A."/>
            <person name="Lienard T."/>
            <person name="Gohl O."/>
            <person name="Martinez-Arias R."/>
            <person name="Jacobi C."/>
            <person name="Starkuviene V."/>
            <person name="Schlenczeck S."/>
            <person name="Dencker S."/>
            <person name="Huber R."/>
            <person name="Klenk H.-P."/>
            <person name="Kramer W."/>
            <person name="Merkl R."/>
            <person name="Gottschalk G."/>
            <person name="Fritz H.-J."/>
        </authorList>
    </citation>
    <scope>NUCLEOTIDE SEQUENCE [LARGE SCALE GENOMIC DNA]</scope>
    <source>
        <strain>ATCC BAA-163 / DSM 7039 / HB27</strain>
    </source>
</reference>